<feature type="chain" id="PRO_0000442092" description="O-fucosyltransferase 30">
    <location>
        <begin position="1"/>
        <end position="507"/>
    </location>
</feature>
<feature type="transmembrane region" description="Helical; Signal-anchor for type II membrane protein" evidence="3">
    <location>
        <begin position="26"/>
        <end position="46"/>
    </location>
</feature>
<feature type="glycosylation site" description="N-linked (GlcNAc...) asparagine" evidence="2">
    <location>
        <position position="110"/>
    </location>
</feature>
<feature type="glycosylation site" description="N-linked (GlcNAc...) asparagine" evidence="2">
    <location>
        <position position="146"/>
    </location>
</feature>
<feature type="glycosylation site" description="N-linked (GlcNAc...) asparagine" evidence="2">
    <location>
        <position position="398"/>
    </location>
</feature>
<feature type="glycosylation site" description="N-linked (GlcNAc...) asparagine" evidence="2">
    <location>
        <position position="410"/>
    </location>
</feature>
<dbReference type="EC" id="2.4.1.-" evidence="3"/>
<dbReference type="EMBL" id="KY906079">
    <property type="protein sequence ID" value="ARJ31443.1"/>
    <property type="molecule type" value="mRNA"/>
</dbReference>
<dbReference type="EMBL" id="Z97343">
    <property type="protein sequence ID" value="CAB10524.1"/>
    <property type="status" value="ALT_SEQ"/>
    <property type="molecule type" value="Genomic_DNA"/>
</dbReference>
<dbReference type="EMBL" id="AL161546">
    <property type="protein sequence ID" value="CAB78746.1"/>
    <property type="status" value="ALT_SEQ"/>
    <property type="molecule type" value="Genomic_DNA"/>
</dbReference>
<dbReference type="EMBL" id="CP002687">
    <property type="protein sequence ID" value="AEE83890.1"/>
    <property type="molecule type" value="Genomic_DNA"/>
</dbReference>
<dbReference type="EMBL" id="BT025328">
    <property type="protein sequence ID" value="ABF57284.1"/>
    <property type="molecule type" value="mRNA"/>
</dbReference>
<dbReference type="PIR" id="G71443">
    <property type="entry name" value="G71443"/>
</dbReference>
<dbReference type="RefSeq" id="NP_193473.1">
    <property type="nucleotide sequence ID" value="NM_117846.3"/>
</dbReference>
<dbReference type="FunCoup" id="Q1JPM5">
    <property type="interactions" value="1318"/>
</dbReference>
<dbReference type="IntAct" id="Q1JPM5">
    <property type="interactions" value="17"/>
</dbReference>
<dbReference type="STRING" id="3702.Q1JPM5"/>
<dbReference type="GlyCosmos" id="Q1JPM5">
    <property type="glycosylation" value="4 sites, No reported glycans"/>
</dbReference>
<dbReference type="GlyGen" id="Q1JPM5">
    <property type="glycosylation" value="4 sites"/>
</dbReference>
<dbReference type="PaxDb" id="3702-AT4G17430.1"/>
<dbReference type="ProteomicsDB" id="238932"/>
<dbReference type="EnsemblPlants" id="AT4G17430.1">
    <property type="protein sequence ID" value="AT4G17430.1"/>
    <property type="gene ID" value="AT4G17430"/>
</dbReference>
<dbReference type="GeneID" id="827454"/>
<dbReference type="Gramene" id="AT4G17430.1">
    <property type="protein sequence ID" value="AT4G17430.1"/>
    <property type="gene ID" value="AT4G17430"/>
</dbReference>
<dbReference type="KEGG" id="ath:AT4G17430"/>
<dbReference type="Araport" id="AT4G17430"/>
<dbReference type="TAIR" id="AT4G17430"/>
<dbReference type="eggNOG" id="ENOG502QU3B">
    <property type="taxonomic scope" value="Eukaryota"/>
</dbReference>
<dbReference type="HOGENOM" id="CLU_042106_0_0_1"/>
<dbReference type="InParanoid" id="Q1JPM5"/>
<dbReference type="OMA" id="FVLLWCD"/>
<dbReference type="PhylomeDB" id="Q1JPM5"/>
<dbReference type="PRO" id="PR:Q1JPM5"/>
<dbReference type="Proteomes" id="UP000006548">
    <property type="component" value="Chromosome 4"/>
</dbReference>
<dbReference type="ExpressionAtlas" id="Q1JPM5">
    <property type="expression patterns" value="baseline and differential"/>
</dbReference>
<dbReference type="GO" id="GO:0005768">
    <property type="term" value="C:endosome"/>
    <property type="evidence" value="ECO:0007005"/>
    <property type="project" value="TAIR"/>
</dbReference>
<dbReference type="GO" id="GO:0005794">
    <property type="term" value="C:Golgi apparatus"/>
    <property type="evidence" value="ECO:0007005"/>
    <property type="project" value="TAIR"/>
</dbReference>
<dbReference type="GO" id="GO:0005797">
    <property type="term" value="C:Golgi medial cisterna"/>
    <property type="evidence" value="ECO:0007005"/>
    <property type="project" value="TAIR"/>
</dbReference>
<dbReference type="GO" id="GO:0016020">
    <property type="term" value="C:membrane"/>
    <property type="evidence" value="ECO:0007669"/>
    <property type="project" value="UniProtKB-SubCell"/>
</dbReference>
<dbReference type="GO" id="GO:0005802">
    <property type="term" value="C:trans-Golgi network"/>
    <property type="evidence" value="ECO:0007005"/>
    <property type="project" value="TAIR"/>
</dbReference>
<dbReference type="GO" id="GO:0016757">
    <property type="term" value="F:glycosyltransferase activity"/>
    <property type="evidence" value="ECO:0007669"/>
    <property type="project" value="UniProtKB-KW"/>
</dbReference>
<dbReference type="GO" id="GO:0006004">
    <property type="term" value="P:fucose metabolic process"/>
    <property type="evidence" value="ECO:0007669"/>
    <property type="project" value="UniProtKB-KW"/>
</dbReference>
<dbReference type="Gene3D" id="3.40.50.11340">
    <property type="match status" value="1"/>
</dbReference>
<dbReference type="Gene3D" id="3.40.50.11350">
    <property type="match status" value="1"/>
</dbReference>
<dbReference type="PANTHER" id="PTHR36050">
    <property type="entry name" value="O-FUCOSYLTRANSFERASE 30"/>
    <property type="match status" value="1"/>
</dbReference>
<dbReference type="PANTHER" id="PTHR36050:SF1">
    <property type="entry name" value="O-FUCOSYLTRANSFERASE 30"/>
    <property type="match status" value="1"/>
</dbReference>
<organism>
    <name type="scientific">Arabidopsis thaliana</name>
    <name type="common">Mouse-ear cress</name>
    <dbReference type="NCBI Taxonomy" id="3702"/>
    <lineage>
        <taxon>Eukaryota</taxon>
        <taxon>Viridiplantae</taxon>
        <taxon>Streptophyta</taxon>
        <taxon>Embryophyta</taxon>
        <taxon>Tracheophyta</taxon>
        <taxon>Spermatophyta</taxon>
        <taxon>Magnoliopsida</taxon>
        <taxon>eudicotyledons</taxon>
        <taxon>Gunneridae</taxon>
        <taxon>Pentapetalae</taxon>
        <taxon>rosids</taxon>
        <taxon>malvids</taxon>
        <taxon>Brassicales</taxon>
        <taxon>Brassicaceae</taxon>
        <taxon>Camelineae</taxon>
        <taxon>Arabidopsis</taxon>
    </lineage>
</organism>
<evidence type="ECO:0000255" key="1"/>
<evidence type="ECO:0000255" key="2">
    <source>
        <dbReference type="PROSITE-ProRule" id="PRU00498"/>
    </source>
</evidence>
<evidence type="ECO:0000305" key="3"/>
<evidence type="ECO:0000312" key="4">
    <source>
        <dbReference type="Araport" id="AT4G17430"/>
    </source>
</evidence>
<evidence type="ECO:0000312" key="5">
    <source>
        <dbReference type="EMBL" id="ARJ31443.1"/>
    </source>
</evidence>
<evidence type="ECO:0000312" key="6">
    <source>
        <dbReference type="EMBL" id="CAB10524.1"/>
    </source>
</evidence>
<evidence type="ECO:0000312" key="7">
    <source>
        <dbReference type="EMBL" id="CAB78746.1"/>
    </source>
</evidence>
<proteinExistence type="evidence at transcript level"/>
<accession>Q1JPM5</accession>
<accession>O23586</accession>
<reference key="1">
    <citation type="submission" date="2017-04" db="EMBL/GenBank/DDBJ databases">
        <title>Arabidopsis glycosyltransferases: an update.</title>
        <authorList>
            <person name="Zeng W."/>
            <person name="Gluza P."/>
            <person name="Heazlewood J."/>
        </authorList>
    </citation>
    <scope>NUCLEOTIDE SEQUENCE [MRNA]</scope>
    <source>
        <strain>cv. Columbia</strain>
    </source>
</reference>
<reference key="2">
    <citation type="journal article" date="1998" name="Nature">
        <title>Analysis of 1.9 Mb of contiguous sequence from chromosome 4 of Arabidopsis thaliana.</title>
        <authorList>
            <person name="Bevan M."/>
            <person name="Bancroft I."/>
            <person name="Bent E."/>
            <person name="Love K."/>
            <person name="Goodman H.M."/>
            <person name="Dean C."/>
            <person name="Bergkamp R."/>
            <person name="Dirkse W."/>
            <person name="van Staveren M."/>
            <person name="Stiekema W."/>
            <person name="Drost L."/>
            <person name="Ridley P."/>
            <person name="Hudson S.-A."/>
            <person name="Patel K."/>
            <person name="Murphy G."/>
            <person name="Piffanelli P."/>
            <person name="Wedler H."/>
            <person name="Wedler E."/>
            <person name="Wambutt R."/>
            <person name="Weitzenegger T."/>
            <person name="Pohl T."/>
            <person name="Terryn N."/>
            <person name="Gielen J."/>
            <person name="Villarroel R."/>
            <person name="De Clercq R."/>
            <person name="van Montagu M."/>
            <person name="Lecharny A."/>
            <person name="Aubourg S."/>
            <person name="Gy I."/>
            <person name="Kreis M."/>
            <person name="Lao N."/>
            <person name="Kavanagh T."/>
            <person name="Hempel S."/>
            <person name="Kotter P."/>
            <person name="Entian K.-D."/>
            <person name="Rieger M."/>
            <person name="Schaefer M."/>
            <person name="Funk B."/>
            <person name="Mueller-Auer S."/>
            <person name="Silvey M."/>
            <person name="James R."/>
            <person name="Monfort A."/>
            <person name="Pons A."/>
            <person name="Puigdomenech P."/>
            <person name="Douka A."/>
            <person name="Voukelatou E."/>
            <person name="Milioni D."/>
            <person name="Hatzopoulos P."/>
            <person name="Piravandi E."/>
            <person name="Obermaier B."/>
            <person name="Hilbert H."/>
            <person name="Duesterhoeft A."/>
            <person name="Moores T."/>
            <person name="Jones J.D.G."/>
            <person name="Eneva T."/>
            <person name="Palme K."/>
            <person name="Benes V."/>
            <person name="Rechmann S."/>
            <person name="Ansorge W."/>
            <person name="Cooke R."/>
            <person name="Berger C."/>
            <person name="Delseny M."/>
            <person name="Voet M."/>
            <person name="Volckaert G."/>
            <person name="Mewes H.-W."/>
            <person name="Klosterman S."/>
            <person name="Schueller C."/>
            <person name="Chalwatzis N."/>
        </authorList>
    </citation>
    <scope>NUCLEOTIDE SEQUENCE [LARGE SCALE GENOMIC DNA]</scope>
    <source>
        <strain>cv. Columbia</strain>
    </source>
</reference>
<reference key="3">
    <citation type="journal article" date="1999" name="Nature">
        <title>Sequence and analysis of chromosome 4 of the plant Arabidopsis thaliana.</title>
        <authorList>
            <person name="Mayer K.F.X."/>
            <person name="Schueller C."/>
            <person name="Wambutt R."/>
            <person name="Murphy G."/>
            <person name="Volckaert G."/>
            <person name="Pohl T."/>
            <person name="Duesterhoeft A."/>
            <person name="Stiekema W."/>
            <person name="Entian K.-D."/>
            <person name="Terryn N."/>
            <person name="Harris B."/>
            <person name="Ansorge W."/>
            <person name="Brandt P."/>
            <person name="Grivell L.A."/>
            <person name="Rieger M."/>
            <person name="Weichselgartner M."/>
            <person name="de Simone V."/>
            <person name="Obermaier B."/>
            <person name="Mache R."/>
            <person name="Mueller M."/>
            <person name="Kreis M."/>
            <person name="Delseny M."/>
            <person name="Puigdomenech P."/>
            <person name="Watson M."/>
            <person name="Schmidtheini T."/>
            <person name="Reichert B."/>
            <person name="Portetelle D."/>
            <person name="Perez-Alonso M."/>
            <person name="Boutry M."/>
            <person name="Bancroft I."/>
            <person name="Vos P."/>
            <person name="Hoheisel J."/>
            <person name="Zimmermann W."/>
            <person name="Wedler H."/>
            <person name="Ridley P."/>
            <person name="Langham S.-A."/>
            <person name="McCullagh B."/>
            <person name="Bilham L."/>
            <person name="Robben J."/>
            <person name="van der Schueren J."/>
            <person name="Grymonprez B."/>
            <person name="Chuang Y.-J."/>
            <person name="Vandenbussche F."/>
            <person name="Braeken M."/>
            <person name="Weltjens I."/>
            <person name="Voet M."/>
            <person name="Bastiaens I."/>
            <person name="Aert R."/>
            <person name="Defoor E."/>
            <person name="Weitzenegger T."/>
            <person name="Bothe G."/>
            <person name="Ramsperger U."/>
            <person name="Hilbert H."/>
            <person name="Braun M."/>
            <person name="Holzer E."/>
            <person name="Brandt A."/>
            <person name="Peters S."/>
            <person name="van Staveren M."/>
            <person name="Dirkse W."/>
            <person name="Mooijman P."/>
            <person name="Klein Lankhorst R."/>
            <person name="Rose M."/>
            <person name="Hauf J."/>
            <person name="Koetter P."/>
            <person name="Berneiser S."/>
            <person name="Hempel S."/>
            <person name="Feldpausch M."/>
            <person name="Lamberth S."/>
            <person name="Van den Daele H."/>
            <person name="De Keyser A."/>
            <person name="Buysshaert C."/>
            <person name="Gielen J."/>
            <person name="Villarroel R."/>
            <person name="De Clercq R."/>
            <person name="van Montagu M."/>
            <person name="Rogers J."/>
            <person name="Cronin A."/>
            <person name="Quail M.A."/>
            <person name="Bray-Allen S."/>
            <person name="Clark L."/>
            <person name="Doggett J."/>
            <person name="Hall S."/>
            <person name="Kay M."/>
            <person name="Lennard N."/>
            <person name="McLay K."/>
            <person name="Mayes R."/>
            <person name="Pettett A."/>
            <person name="Rajandream M.A."/>
            <person name="Lyne M."/>
            <person name="Benes V."/>
            <person name="Rechmann S."/>
            <person name="Borkova D."/>
            <person name="Bloecker H."/>
            <person name="Scharfe M."/>
            <person name="Grimm M."/>
            <person name="Loehnert T.-H."/>
            <person name="Dose S."/>
            <person name="de Haan M."/>
            <person name="Maarse A.C."/>
            <person name="Schaefer M."/>
            <person name="Mueller-Auer S."/>
            <person name="Gabel C."/>
            <person name="Fuchs M."/>
            <person name="Fartmann B."/>
            <person name="Granderath K."/>
            <person name="Dauner D."/>
            <person name="Herzl A."/>
            <person name="Neumann S."/>
            <person name="Argiriou A."/>
            <person name="Vitale D."/>
            <person name="Liguori R."/>
            <person name="Piravandi E."/>
            <person name="Massenet O."/>
            <person name="Quigley F."/>
            <person name="Clabauld G."/>
            <person name="Muendlein A."/>
            <person name="Felber R."/>
            <person name="Schnabl S."/>
            <person name="Hiller R."/>
            <person name="Schmidt W."/>
            <person name="Lecharny A."/>
            <person name="Aubourg S."/>
            <person name="Chefdor F."/>
            <person name="Cooke R."/>
            <person name="Berger C."/>
            <person name="Monfort A."/>
            <person name="Casacuberta E."/>
            <person name="Gibbons T."/>
            <person name="Weber N."/>
            <person name="Vandenbol M."/>
            <person name="Bargues M."/>
            <person name="Terol J."/>
            <person name="Torres A."/>
            <person name="Perez-Perez A."/>
            <person name="Purnelle B."/>
            <person name="Bent E."/>
            <person name="Johnson S."/>
            <person name="Tacon D."/>
            <person name="Jesse T."/>
            <person name="Heijnen L."/>
            <person name="Schwarz S."/>
            <person name="Scholler P."/>
            <person name="Heber S."/>
            <person name="Francs P."/>
            <person name="Bielke C."/>
            <person name="Frishman D."/>
            <person name="Haase D."/>
            <person name="Lemcke K."/>
            <person name="Mewes H.-W."/>
            <person name="Stocker S."/>
            <person name="Zaccaria P."/>
            <person name="Bevan M."/>
            <person name="Wilson R.K."/>
            <person name="de la Bastide M."/>
            <person name="Habermann K."/>
            <person name="Parnell L."/>
            <person name="Dedhia N."/>
            <person name="Gnoj L."/>
            <person name="Schutz K."/>
            <person name="Huang E."/>
            <person name="Spiegel L."/>
            <person name="Sekhon M."/>
            <person name="Murray J."/>
            <person name="Sheet P."/>
            <person name="Cordes M."/>
            <person name="Abu-Threideh J."/>
            <person name="Stoneking T."/>
            <person name="Kalicki J."/>
            <person name="Graves T."/>
            <person name="Harmon G."/>
            <person name="Edwards J."/>
            <person name="Latreille P."/>
            <person name="Courtney L."/>
            <person name="Cloud J."/>
            <person name="Abbott A."/>
            <person name="Scott K."/>
            <person name="Johnson D."/>
            <person name="Minx P."/>
            <person name="Bentley D."/>
            <person name="Fulton B."/>
            <person name="Miller N."/>
            <person name="Greco T."/>
            <person name="Kemp K."/>
            <person name="Kramer J."/>
            <person name="Fulton L."/>
            <person name="Mardis E."/>
            <person name="Dante M."/>
            <person name="Pepin K."/>
            <person name="Hillier L.W."/>
            <person name="Nelson J."/>
            <person name="Spieth J."/>
            <person name="Ryan E."/>
            <person name="Andrews S."/>
            <person name="Geisel C."/>
            <person name="Layman D."/>
            <person name="Du H."/>
            <person name="Ali J."/>
            <person name="Berghoff A."/>
            <person name="Jones K."/>
            <person name="Drone K."/>
            <person name="Cotton M."/>
            <person name="Joshu C."/>
            <person name="Antonoiu B."/>
            <person name="Zidanic M."/>
            <person name="Strong C."/>
            <person name="Sun H."/>
            <person name="Lamar B."/>
            <person name="Yordan C."/>
            <person name="Ma P."/>
            <person name="Zhong J."/>
            <person name="Preston R."/>
            <person name="Vil D."/>
            <person name="Shekher M."/>
            <person name="Matero A."/>
            <person name="Shah R."/>
            <person name="Swaby I.K."/>
            <person name="O'Shaughnessy A."/>
            <person name="Rodriguez M."/>
            <person name="Hoffman J."/>
            <person name="Till S."/>
            <person name="Granat S."/>
            <person name="Shohdy N."/>
            <person name="Hasegawa A."/>
            <person name="Hameed A."/>
            <person name="Lodhi M."/>
            <person name="Johnson A."/>
            <person name="Chen E."/>
            <person name="Marra M.A."/>
            <person name="Martienssen R."/>
            <person name="McCombie W.R."/>
        </authorList>
    </citation>
    <scope>NUCLEOTIDE SEQUENCE [LARGE SCALE GENOMIC DNA]</scope>
    <source>
        <strain>cv. Columbia</strain>
    </source>
</reference>
<reference key="4">
    <citation type="journal article" date="2017" name="Plant J.">
        <title>Araport11: a complete reannotation of the Arabidopsis thaliana reference genome.</title>
        <authorList>
            <person name="Cheng C.Y."/>
            <person name="Krishnakumar V."/>
            <person name="Chan A.P."/>
            <person name="Thibaud-Nissen F."/>
            <person name="Schobel S."/>
            <person name="Town C.D."/>
        </authorList>
    </citation>
    <scope>GENOME REANNOTATION</scope>
    <source>
        <strain>cv. Columbia</strain>
    </source>
</reference>
<reference key="5">
    <citation type="submission" date="2006-05" db="EMBL/GenBank/DDBJ databases">
        <title>Arabidopsis ORF clones.</title>
        <authorList>
            <person name="Shinn P."/>
            <person name="Chen H."/>
            <person name="Kim C.J."/>
            <person name="Quinitio C."/>
            <person name="Ecker J.R."/>
        </authorList>
    </citation>
    <scope>NUCLEOTIDE SEQUENCE [LARGE SCALE MRNA]</scope>
    <source>
        <strain>cv. Columbia</strain>
    </source>
</reference>
<reference key="6">
    <citation type="journal article" date="2012" name="Front. Plant Sci.">
        <title>Plant glycosyltransferases beyond CAZy: a perspective on DUF families.</title>
        <authorList>
            <person name="Hansen S.F."/>
            <person name="Harholt J."/>
            <person name="Oikawa A."/>
            <person name="Scheller H.V."/>
        </authorList>
    </citation>
    <scope>REVIEW</scope>
</reference>
<reference key="7">
    <citation type="journal article" date="2013" name="Plant J.">
        <title>Identification of an additional protein involved in mannan biosynthesis.</title>
        <authorList>
            <person name="Wang Y."/>
            <person name="Mortimer J.C."/>
            <person name="Davis J."/>
            <person name="Dupree P."/>
            <person name="Keegstra K."/>
        </authorList>
    </citation>
    <scope>GENE FAMILY</scope>
</reference>
<reference key="8">
    <citation type="journal article" date="2014" name="Plant J.">
        <title>The plant glycosyltransferase clone collection for functional genomics.</title>
        <authorList>
            <person name="Lao J."/>
            <person name="Oikawa A."/>
            <person name="Bromley J.R."/>
            <person name="McInerney P."/>
            <person name="Suttangkakul A."/>
            <person name="Smith-Moritz A.M."/>
            <person name="Plahar H."/>
            <person name="Chiu T.-Y."/>
            <person name="Gonzalez Fernandez-Nino S.M.G."/>
            <person name="Ebert B."/>
            <person name="Yang F."/>
            <person name="Christiansen K.M."/>
            <person name="Hansen S.F."/>
            <person name="Stonebloom S."/>
            <person name="Adams P.D."/>
            <person name="Ronald P.C."/>
            <person name="Hillson N.J."/>
            <person name="Hadi M.Z."/>
            <person name="Vega-Sanchez M.E."/>
            <person name="Loque D."/>
            <person name="Scheller H.V."/>
            <person name="Heazlewood J.L."/>
        </authorList>
    </citation>
    <scope>WEB RESOURCE</scope>
</reference>
<keyword id="KW-0119">Carbohydrate metabolism</keyword>
<keyword id="KW-0294">Fucose metabolism</keyword>
<keyword id="KW-0325">Glycoprotein</keyword>
<keyword id="KW-0328">Glycosyltransferase</keyword>
<keyword id="KW-0472">Membrane</keyword>
<keyword id="KW-1185">Reference proteome</keyword>
<keyword id="KW-0735">Signal-anchor</keyword>
<keyword id="KW-0808">Transferase</keyword>
<keyword id="KW-0812">Transmembrane</keyword>
<keyword id="KW-1133">Transmembrane helix</keyword>
<sequence length="507" mass="56835">MNNFFNPSRPSPRPWPNRKKQTDKSAIFLCSVSILVVFFIVVFFITYSEMPKSLFSISAFSGSVQFPQCRSEILTRTLLGQKFLWYAPHSGFSNQLSEFKNALLMAGILNRTLIIPPILDHHAVALGSCPKFRVLSPSEIRISVWNHSIELLKTDRYVSMADIVDISSLVSSSAVRVIDFRYFASLQCGVDLETLCTDDLAEQSQAYESLKQCGYLLSGVRGNVDKCLYAVDEDCRTTVWTYKNGEADGRLDSFQPDEKLKKKKKLSNVRRRRDVYKTLGHGTEAESAAILAFGSLFTAPYKGSELYIDIHKSPKIKSLVEKVDFLPFVREIMIAGKKFASETIKAPFLCAQLRLLDGQFKNHRESTFTGLYQKLEALSVKNPGLINVFVMTDLPEFNWTGTYLGDLSKNSTNFKLHFIGEQDEFLARTEHELDSASHGQKFGSIPMSLDSIKKMQTHCYPHGGSNVQLYIEEAVCSCASLGFVGTPGSTIADSVEMMRKYNACSSS</sequence>
<name>OFT30_ARATH</name>
<comment type="pathway">
    <text evidence="3">Glycan metabolism.</text>
</comment>
<comment type="subcellular location">
    <subcellularLocation>
        <location evidence="1">Membrane</location>
        <topology evidence="3">Single-pass type II membrane protein</topology>
    </subcellularLocation>
</comment>
<comment type="similarity">
    <text evidence="3">Belongs to the glycosyltransferase GT106 family.</text>
</comment>
<comment type="sequence caution" evidence="3">
    <conflict type="erroneous gene model prediction">
        <sequence resource="EMBL-CDS" id="CAB10524"/>
    </conflict>
</comment>
<comment type="sequence caution" evidence="3">
    <conflict type="erroneous gene model prediction">
        <sequence resource="EMBL-CDS" id="CAB78746"/>
    </conflict>
</comment>
<gene>
    <name evidence="3" type="primary">OFUT30</name>
    <name evidence="4" type="ordered locus">At4g17430</name>
    <name evidence="6" type="ORF">dl4750c</name>
    <name evidence="7" type="ORF">FCAALL.1</name>
</gene>
<protein>
    <recommendedName>
        <fullName evidence="3">O-fucosyltransferase 30</fullName>
        <shortName evidence="3">O-FucT-30</shortName>
        <ecNumber evidence="3">2.4.1.-</ecNumber>
    </recommendedName>
    <alternativeName>
        <fullName evidence="5">O-fucosyltransferase family protein</fullName>
    </alternativeName>
</protein>